<proteinExistence type="evidence at protein level"/>
<keyword id="KW-0007">Acetylation</keyword>
<keyword id="KW-0445">Lipid transport</keyword>
<keyword id="KW-0472">Membrane</keyword>
<keyword id="KW-0496">Mitochondrion</keyword>
<keyword id="KW-0999">Mitochondrion inner membrane</keyword>
<keyword id="KW-1185">Reference proteome</keyword>
<keyword id="KW-0677">Repeat</keyword>
<keyword id="KW-0812">Transmembrane</keyword>
<keyword id="KW-1133">Transmembrane helix</keyword>
<keyword id="KW-0813">Transport</keyword>
<feature type="initiator methionine" description="Removed" evidence="2">
    <location>
        <position position="1"/>
    </location>
</feature>
<feature type="chain" id="PRO_0000090630" description="Mitochondrial carnitine/acylcarnitine carrier protein">
    <location>
        <begin position="2"/>
        <end position="301"/>
    </location>
</feature>
<feature type="topological domain" description="Cytoplasmic" evidence="4">
    <location>
        <begin position="2"/>
        <end position="12"/>
    </location>
</feature>
<feature type="transmembrane region" description="Helical; Name=1" evidence="4">
    <location>
        <begin position="13"/>
        <end position="31"/>
    </location>
</feature>
<feature type="topological domain" description="Mitochondrial matrix" evidence="4">
    <location>
        <begin position="32"/>
        <end position="73"/>
    </location>
</feature>
<feature type="transmembrane region" description="Helical; Name=2" evidence="4">
    <location>
        <begin position="74"/>
        <end position="93"/>
    </location>
</feature>
<feature type="topological domain" description="Cytoplasmic" evidence="4">
    <location>
        <begin position="94"/>
        <end position="112"/>
    </location>
</feature>
<feature type="transmembrane region" description="Helical; Name=3" evidence="4">
    <location>
        <begin position="113"/>
        <end position="131"/>
    </location>
</feature>
<feature type="topological domain" description="Mitochondrial matrix" evidence="4">
    <location>
        <begin position="132"/>
        <end position="170"/>
    </location>
</feature>
<feature type="transmembrane region" description="Helical; Name=4" evidence="4">
    <location>
        <begin position="171"/>
        <end position="190"/>
    </location>
</feature>
<feature type="topological domain" description="Cytoplasmic" evidence="4">
    <location>
        <begin position="191"/>
        <end position="211"/>
    </location>
</feature>
<feature type="transmembrane region" description="Helical; Name=5" evidence="4">
    <location>
        <begin position="212"/>
        <end position="230"/>
    </location>
</feature>
<feature type="topological domain" description="Mitochondrial matrix" evidence="4">
    <location>
        <begin position="231"/>
        <end position="267"/>
    </location>
</feature>
<feature type="transmembrane region" description="Helical; Name=6" evidence="4">
    <location>
        <begin position="268"/>
        <end position="287"/>
    </location>
</feature>
<feature type="topological domain" description="Cytoplasmic" evidence="4">
    <location>
        <begin position="288"/>
        <end position="301"/>
    </location>
</feature>
<feature type="repeat" description="Solcar 1">
    <location>
        <begin position="8"/>
        <end position="99"/>
    </location>
</feature>
<feature type="repeat" description="Solcar 2">
    <location>
        <begin position="108"/>
        <end position="196"/>
    </location>
</feature>
<feature type="repeat" description="Solcar 3">
    <location>
        <begin position="207"/>
        <end position="293"/>
    </location>
</feature>
<feature type="modified residue" description="N-acetylalanine" evidence="2">
    <location>
        <position position="2"/>
    </location>
</feature>
<feature type="modified residue" description="N6-acetyllysine" evidence="8">
    <location>
        <position position="148"/>
    </location>
</feature>
<feature type="modified residue" description="N6-acetyllysine" evidence="8">
    <location>
        <position position="157"/>
    </location>
</feature>
<feature type="modified residue" description="N6-acetyllysine; alternate" evidence="8">
    <location>
        <position position="170"/>
    </location>
</feature>
<feature type="modified residue" description="N6-succinyllysine; alternate" evidence="9">
    <location>
        <position position="170"/>
    </location>
</feature>
<name>MCAT_MOUSE</name>
<organism>
    <name type="scientific">Mus musculus</name>
    <name type="common">Mouse</name>
    <dbReference type="NCBI Taxonomy" id="10090"/>
    <lineage>
        <taxon>Eukaryota</taxon>
        <taxon>Metazoa</taxon>
        <taxon>Chordata</taxon>
        <taxon>Craniata</taxon>
        <taxon>Vertebrata</taxon>
        <taxon>Euteleostomi</taxon>
        <taxon>Mammalia</taxon>
        <taxon>Eutheria</taxon>
        <taxon>Euarchontoglires</taxon>
        <taxon>Glires</taxon>
        <taxon>Rodentia</taxon>
        <taxon>Myomorpha</taxon>
        <taxon>Muroidea</taxon>
        <taxon>Muridae</taxon>
        <taxon>Murinae</taxon>
        <taxon>Mus</taxon>
        <taxon>Mus</taxon>
    </lineage>
</organism>
<comment type="function">
    <text evidence="2">Mediates the electroneutral exchange of acylcarnitines (O-acyl-(R)-carnitine or L-acylcarnitine) of different acyl chain lengths (ranging from O-acetyl-(R)-carnitine to long-chain O-acyl-(R)-carnitines) with free carnitine ((R)-carnitine or L-carnitine) across the mitochondrial inner membrane, via a ping-pong mechanism. Key player in the mitochondrial oxidation pathway, it translocates the fatty acids in the form of acylcarnitines into the mitochondrial matrix, where the carnitine palmitoyltransferase 2 (CPT-2) activates them to undergo fatty acid beta-oxidation. Catalyzes the unidirectional transport (uniport) of carnitine at lower rates than the antiport (exchange).</text>
</comment>
<comment type="catalytic activity">
    <reaction evidence="3">
        <text>O-acetyl-(R)-carnitine(in) + (R)-carnitine(out) = O-acetyl-(R)-carnitine(out) + (R)-carnitine(in)</text>
        <dbReference type="Rhea" id="RHEA:49908"/>
        <dbReference type="ChEBI" id="CHEBI:16347"/>
        <dbReference type="ChEBI" id="CHEBI:57589"/>
    </reaction>
</comment>
<comment type="catalytic activity">
    <reaction evidence="2">
        <text>an O-acyl-(R)-carnitine(in) + (R)-carnitine(out) = an O-acyl-(R)-carnitine(out) + (R)-carnitine(in)</text>
        <dbReference type="Rhea" id="RHEA:49924"/>
        <dbReference type="ChEBI" id="CHEBI:16347"/>
        <dbReference type="ChEBI" id="CHEBI:75659"/>
    </reaction>
</comment>
<comment type="catalytic activity">
    <reaction evidence="3">
        <text>O-propanoyl-(R)-carnitine(in) + (R)-carnitine(out) = O-propanoyl-(R)-carnitine(out) + (R)-carnitine(in)</text>
        <dbReference type="Rhea" id="RHEA:49912"/>
        <dbReference type="ChEBI" id="CHEBI:16347"/>
        <dbReference type="ChEBI" id="CHEBI:53210"/>
    </reaction>
</comment>
<comment type="catalytic activity">
    <reaction evidence="3">
        <text>O-hexadecanoyl-(R)-carnitine(in) + (R)-carnitine(out) = O-hexadecanoyl-(R)-carnitine(out) + (R)-carnitine(in)</text>
        <dbReference type="Rhea" id="RHEA:49916"/>
        <dbReference type="ChEBI" id="CHEBI:16347"/>
        <dbReference type="ChEBI" id="CHEBI:17490"/>
    </reaction>
</comment>
<comment type="catalytic activity">
    <reaction evidence="3">
        <text>O-octanoyl-(R)-carnitine(in) + (R)-carnitine(out) = O-octanoyl-(R)-carnitine(out) + (R)-carnitine(in)</text>
        <dbReference type="Rhea" id="RHEA:49920"/>
        <dbReference type="ChEBI" id="CHEBI:16347"/>
        <dbReference type="ChEBI" id="CHEBI:18102"/>
    </reaction>
</comment>
<comment type="catalytic activity">
    <reaction evidence="2">
        <text>(R)-carnitine(in) = (R)-carnitine(out)</text>
        <dbReference type="Rhea" id="RHEA:34959"/>
        <dbReference type="ChEBI" id="CHEBI:16347"/>
    </reaction>
</comment>
<comment type="subcellular location">
    <subcellularLocation>
        <location evidence="1">Mitochondrion inner membrane</location>
        <topology evidence="1">Multi-pass membrane protein</topology>
    </subcellularLocation>
</comment>
<comment type="tissue specificity">
    <text evidence="5">Widely expressed, with highest levels in the liver, intermediate levels in heart, testis and kidney and low levels in brain, including cortex, cerebellum, hippocampus and hypothalamus.</text>
</comment>
<comment type="similarity">
    <text evidence="6">Belongs to the mitochondrial carrier (TC 2.A.29) family.</text>
</comment>
<protein>
    <recommendedName>
        <fullName evidence="6">Mitochondrial carnitine/acylcarnitine carrier protein</fullName>
    </recommendedName>
    <alternativeName>
        <fullName>Carnitine/acylcarnitine translocase</fullName>
        <shortName>CAC</shortName>
        <shortName>CACT</shortName>
        <shortName>mCAC</shortName>
    </alternativeName>
    <alternativeName>
        <fullName>Solute carrier family 25 member 20</fullName>
    </alternativeName>
</protein>
<evidence type="ECO:0000250" key="1"/>
<evidence type="ECO:0000250" key="2">
    <source>
        <dbReference type="UniProtKB" id="O43772"/>
    </source>
</evidence>
<evidence type="ECO:0000250" key="3">
    <source>
        <dbReference type="UniProtKB" id="P97521"/>
    </source>
</evidence>
<evidence type="ECO:0000255" key="4"/>
<evidence type="ECO:0000269" key="5">
    <source>
    </source>
</evidence>
<evidence type="ECO:0000305" key="6"/>
<evidence type="ECO:0000312" key="7">
    <source>
        <dbReference type="EMBL" id="BAA74768.1"/>
    </source>
</evidence>
<evidence type="ECO:0007744" key="8">
    <source>
    </source>
</evidence>
<evidence type="ECO:0007744" key="9">
    <source>
    </source>
</evidence>
<dbReference type="EMBL" id="AB017112">
    <property type="protein sequence ID" value="BAA74768.1"/>
    <property type="molecule type" value="mRNA"/>
</dbReference>
<dbReference type="EMBL" id="AK075624">
    <property type="protein sequence ID" value="BAC35865.1"/>
    <property type="molecule type" value="mRNA"/>
</dbReference>
<dbReference type="EMBL" id="AK152436">
    <property type="protein sequence ID" value="BAE31218.1"/>
    <property type="molecule type" value="mRNA"/>
</dbReference>
<dbReference type="EMBL" id="BC029733">
    <property type="protein sequence ID" value="AAH29733.1"/>
    <property type="molecule type" value="mRNA"/>
</dbReference>
<dbReference type="CCDS" id="CCDS23535.1"/>
<dbReference type="RefSeq" id="NP_065266.1">
    <property type="nucleotide sequence ID" value="NM_020520.5"/>
</dbReference>
<dbReference type="SMR" id="Q9Z2Z6"/>
<dbReference type="BioGRID" id="208247">
    <property type="interactions" value="5"/>
</dbReference>
<dbReference type="FunCoup" id="Q9Z2Z6">
    <property type="interactions" value="2195"/>
</dbReference>
<dbReference type="IntAct" id="Q9Z2Z6">
    <property type="interactions" value="3"/>
</dbReference>
<dbReference type="STRING" id="10090.ENSMUSP00000035222"/>
<dbReference type="GlyGen" id="Q9Z2Z6">
    <property type="glycosylation" value="1 site, 1 O-linked glycan (1 site)"/>
</dbReference>
<dbReference type="iPTMnet" id="Q9Z2Z6"/>
<dbReference type="PhosphoSitePlus" id="Q9Z2Z6"/>
<dbReference type="SwissPalm" id="Q9Z2Z6"/>
<dbReference type="jPOST" id="Q9Z2Z6"/>
<dbReference type="PaxDb" id="10090-ENSMUSP00000035222"/>
<dbReference type="ProteomicsDB" id="252741"/>
<dbReference type="Pumba" id="Q9Z2Z6"/>
<dbReference type="Antibodypedia" id="3111">
    <property type="antibodies" value="219 antibodies from 27 providers"/>
</dbReference>
<dbReference type="DNASU" id="57279"/>
<dbReference type="Ensembl" id="ENSMUST00000035222.6">
    <property type="protein sequence ID" value="ENSMUSP00000035222.6"/>
    <property type="gene ID" value="ENSMUSG00000032602.7"/>
</dbReference>
<dbReference type="GeneID" id="57279"/>
<dbReference type="KEGG" id="mmu:57279"/>
<dbReference type="UCSC" id="uc009rqs.1">
    <property type="organism name" value="mouse"/>
</dbReference>
<dbReference type="AGR" id="MGI:1928738"/>
<dbReference type="CTD" id="788"/>
<dbReference type="MGI" id="MGI:1928738">
    <property type="gene designation" value="Slc25a20"/>
</dbReference>
<dbReference type="VEuPathDB" id="HostDB:ENSMUSG00000032602"/>
<dbReference type="eggNOG" id="KOG0758">
    <property type="taxonomic scope" value="Eukaryota"/>
</dbReference>
<dbReference type="GeneTree" id="ENSGT00940000157863"/>
<dbReference type="HOGENOM" id="CLU_015166_16_0_1"/>
<dbReference type="InParanoid" id="Q9Z2Z6"/>
<dbReference type="OMA" id="NWAVGIP"/>
<dbReference type="OrthoDB" id="14252at2759"/>
<dbReference type="PhylomeDB" id="Q9Z2Z6"/>
<dbReference type="TreeFam" id="TF300894"/>
<dbReference type="Reactome" id="R-MMU-200425">
    <property type="pathway name" value="Carnitine shuttle"/>
</dbReference>
<dbReference type="BioGRID-ORCS" id="57279">
    <property type="hits" value="3 hits in 80 CRISPR screens"/>
</dbReference>
<dbReference type="ChiTaRS" id="Slc25a20">
    <property type="organism name" value="mouse"/>
</dbReference>
<dbReference type="PRO" id="PR:Q9Z2Z6"/>
<dbReference type="Proteomes" id="UP000000589">
    <property type="component" value="Chromosome 9"/>
</dbReference>
<dbReference type="RNAct" id="Q9Z2Z6">
    <property type="molecule type" value="protein"/>
</dbReference>
<dbReference type="Bgee" id="ENSMUSG00000032602">
    <property type="expression patterns" value="Expressed in brown adipose tissue and 259 other cell types or tissues"/>
</dbReference>
<dbReference type="GO" id="GO:0005829">
    <property type="term" value="C:cytosol"/>
    <property type="evidence" value="ECO:0007669"/>
    <property type="project" value="Ensembl"/>
</dbReference>
<dbReference type="GO" id="GO:0005743">
    <property type="term" value="C:mitochondrial inner membrane"/>
    <property type="evidence" value="ECO:0007005"/>
    <property type="project" value="MGI"/>
</dbReference>
<dbReference type="GO" id="GO:0005739">
    <property type="term" value="C:mitochondrion"/>
    <property type="evidence" value="ECO:0007005"/>
    <property type="project" value="MGI"/>
</dbReference>
<dbReference type="GO" id="GO:0015226">
    <property type="term" value="F:carnitine transmembrane transporter activity"/>
    <property type="evidence" value="ECO:0000266"/>
    <property type="project" value="MGI"/>
</dbReference>
<dbReference type="GO" id="GO:0015227">
    <property type="term" value="F:O-acyl-L-carnitine transmembrane transporter activity"/>
    <property type="evidence" value="ECO:0000250"/>
    <property type="project" value="UniProtKB"/>
</dbReference>
<dbReference type="GO" id="GO:0006853">
    <property type="term" value="P:carnitine shuttle"/>
    <property type="evidence" value="ECO:0000315"/>
    <property type="project" value="MGI"/>
</dbReference>
<dbReference type="GO" id="GO:1902603">
    <property type="term" value="P:carnitine transmembrane transport"/>
    <property type="evidence" value="ECO:0000250"/>
    <property type="project" value="UniProtKB"/>
</dbReference>
<dbReference type="GO" id="GO:0001701">
    <property type="term" value="P:in utero embryonic development"/>
    <property type="evidence" value="ECO:0000315"/>
    <property type="project" value="MGI"/>
</dbReference>
<dbReference type="FunFam" id="1.50.40.10:FF:000051">
    <property type="entry name" value="Mitochondrial carnitine/acylcarnitine carrier protein"/>
    <property type="match status" value="1"/>
</dbReference>
<dbReference type="FunFam" id="1.50.40.10:FF:000040">
    <property type="entry name" value="mitochondrial carnitine/acylcarnitine carrier protein"/>
    <property type="match status" value="1"/>
</dbReference>
<dbReference type="Gene3D" id="1.50.40.10">
    <property type="entry name" value="Mitochondrial carrier domain"/>
    <property type="match status" value="2"/>
</dbReference>
<dbReference type="InterPro" id="IPR050567">
    <property type="entry name" value="Mitochondrial_Carrier"/>
</dbReference>
<dbReference type="InterPro" id="IPR018108">
    <property type="entry name" value="Mitochondrial_sb/sol_carrier"/>
</dbReference>
<dbReference type="InterPro" id="IPR023395">
    <property type="entry name" value="Mt_carrier_dom_sf"/>
</dbReference>
<dbReference type="PANTHER" id="PTHR45624">
    <property type="entry name" value="MITOCHONDRIAL BASIC AMINO ACIDS TRANSPORTER-RELATED"/>
    <property type="match status" value="1"/>
</dbReference>
<dbReference type="PANTHER" id="PTHR45624:SF56">
    <property type="entry name" value="MITOCHONDRIAL CARNITINE_ACYLCARNITINE CARRIER PROTEIN"/>
    <property type="match status" value="1"/>
</dbReference>
<dbReference type="Pfam" id="PF00153">
    <property type="entry name" value="Mito_carr"/>
    <property type="match status" value="3"/>
</dbReference>
<dbReference type="SUPFAM" id="SSF103506">
    <property type="entry name" value="Mitochondrial carrier"/>
    <property type="match status" value="1"/>
</dbReference>
<dbReference type="PROSITE" id="PS50920">
    <property type="entry name" value="SOLCAR"/>
    <property type="match status" value="3"/>
</dbReference>
<gene>
    <name evidence="7" type="primary">Slc25a20</name>
    <name type="synonym">Cac</name>
    <name type="synonym">Cact</name>
</gene>
<reference key="1">
    <citation type="submission" date="1998-08" db="EMBL/GenBank/DDBJ databases">
        <title>Cloning, genomic structure and chromosomal localization of murine mitochondrial carnitine-acylcarnitine translocase gene and mutation analysis in the juvenile visceral steatosis (JVS) mouse.</title>
        <authorList>
            <person name="Lu K."/>
            <person name="Kuwajima M."/>
            <person name="Shima K."/>
            <person name="Nakamura Y."/>
            <person name="Nishimori H."/>
        </authorList>
    </citation>
    <scope>NUCLEOTIDE SEQUENCE [MRNA]</scope>
</reference>
<reference key="2">
    <citation type="journal article" date="2005" name="Science">
        <title>The transcriptional landscape of the mammalian genome.</title>
        <authorList>
            <person name="Carninci P."/>
            <person name="Kasukawa T."/>
            <person name="Katayama S."/>
            <person name="Gough J."/>
            <person name="Frith M.C."/>
            <person name="Maeda N."/>
            <person name="Oyama R."/>
            <person name="Ravasi T."/>
            <person name="Lenhard B."/>
            <person name="Wells C."/>
            <person name="Kodzius R."/>
            <person name="Shimokawa K."/>
            <person name="Bajic V.B."/>
            <person name="Brenner S.E."/>
            <person name="Batalov S."/>
            <person name="Forrest A.R."/>
            <person name="Zavolan M."/>
            <person name="Davis M.J."/>
            <person name="Wilming L.G."/>
            <person name="Aidinis V."/>
            <person name="Allen J.E."/>
            <person name="Ambesi-Impiombato A."/>
            <person name="Apweiler R."/>
            <person name="Aturaliya R.N."/>
            <person name="Bailey T.L."/>
            <person name="Bansal M."/>
            <person name="Baxter L."/>
            <person name="Beisel K.W."/>
            <person name="Bersano T."/>
            <person name="Bono H."/>
            <person name="Chalk A.M."/>
            <person name="Chiu K.P."/>
            <person name="Choudhary V."/>
            <person name="Christoffels A."/>
            <person name="Clutterbuck D.R."/>
            <person name="Crowe M.L."/>
            <person name="Dalla E."/>
            <person name="Dalrymple B.P."/>
            <person name="de Bono B."/>
            <person name="Della Gatta G."/>
            <person name="di Bernardo D."/>
            <person name="Down T."/>
            <person name="Engstrom P."/>
            <person name="Fagiolini M."/>
            <person name="Faulkner G."/>
            <person name="Fletcher C.F."/>
            <person name="Fukushima T."/>
            <person name="Furuno M."/>
            <person name="Futaki S."/>
            <person name="Gariboldi M."/>
            <person name="Georgii-Hemming P."/>
            <person name="Gingeras T.R."/>
            <person name="Gojobori T."/>
            <person name="Green R.E."/>
            <person name="Gustincich S."/>
            <person name="Harbers M."/>
            <person name="Hayashi Y."/>
            <person name="Hensch T.K."/>
            <person name="Hirokawa N."/>
            <person name="Hill D."/>
            <person name="Huminiecki L."/>
            <person name="Iacono M."/>
            <person name="Ikeo K."/>
            <person name="Iwama A."/>
            <person name="Ishikawa T."/>
            <person name="Jakt M."/>
            <person name="Kanapin A."/>
            <person name="Katoh M."/>
            <person name="Kawasawa Y."/>
            <person name="Kelso J."/>
            <person name="Kitamura H."/>
            <person name="Kitano H."/>
            <person name="Kollias G."/>
            <person name="Krishnan S.P."/>
            <person name="Kruger A."/>
            <person name="Kummerfeld S.K."/>
            <person name="Kurochkin I.V."/>
            <person name="Lareau L.F."/>
            <person name="Lazarevic D."/>
            <person name="Lipovich L."/>
            <person name="Liu J."/>
            <person name="Liuni S."/>
            <person name="McWilliam S."/>
            <person name="Madan Babu M."/>
            <person name="Madera M."/>
            <person name="Marchionni L."/>
            <person name="Matsuda H."/>
            <person name="Matsuzawa S."/>
            <person name="Miki H."/>
            <person name="Mignone F."/>
            <person name="Miyake S."/>
            <person name="Morris K."/>
            <person name="Mottagui-Tabar S."/>
            <person name="Mulder N."/>
            <person name="Nakano N."/>
            <person name="Nakauchi H."/>
            <person name="Ng P."/>
            <person name="Nilsson R."/>
            <person name="Nishiguchi S."/>
            <person name="Nishikawa S."/>
            <person name="Nori F."/>
            <person name="Ohara O."/>
            <person name="Okazaki Y."/>
            <person name="Orlando V."/>
            <person name="Pang K.C."/>
            <person name="Pavan W.J."/>
            <person name="Pavesi G."/>
            <person name="Pesole G."/>
            <person name="Petrovsky N."/>
            <person name="Piazza S."/>
            <person name="Reed J."/>
            <person name="Reid J.F."/>
            <person name="Ring B.Z."/>
            <person name="Ringwald M."/>
            <person name="Rost B."/>
            <person name="Ruan Y."/>
            <person name="Salzberg S.L."/>
            <person name="Sandelin A."/>
            <person name="Schneider C."/>
            <person name="Schoenbach C."/>
            <person name="Sekiguchi K."/>
            <person name="Semple C.A."/>
            <person name="Seno S."/>
            <person name="Sessa L."/>
            <person name="Sheng Y."/>
            <person name="Shibata Y."/>
            <person name="Shimada H."/>
            <person name="Shimada K."/>
            <person name="Silva D."/>
            <person name="Sinclair B."/>
            <person name="Sperling S."/>
            <person name="Stupka E."/>
            <person name="Sugiura K."/>
            <person name="Sultana R."/>
            <person name="Takenaka Y."/>
            <person name="Taki K."/>
            <person name="Tammoja K."/>
            <person name="Tan S.L."/>
            <person name="Tang S."/>
            <person name="Taylor M.S."/>
            <person name="Tegner J."/>
            <person name="Teichmann S.A."/>
            <person name="Ueda H.R."/>
            <person name="van Nimwegen E."/>
            <person name="Verardo R."/>
            <person name="Wei C.L."/>
            <person name="Yagi K."/>
            <person name="Yamanishi H."/>
            <person name="Zabarovsky E."/>
            <person name="Zhu S."/>
            <person name="Zimmer A."/>
            <person name="Hide W."/>
            <person name="Bult C."/>
            <person name="Grimmond S.M."/>
            <person name="Teasdale R.D."/>
            <person name="Liu E.T."/>
            <person name="Brusic V."/>
            <person name="Quackenbush J."/>
            <person name="Wahlestedt C."/>
            <person name="Mattick J.S."/>
            <person name="Hume D.A."/>
            <person name="Kai C."/>
            <person name="Sasaki D."/>
            <person name="Tomaru Y."/>
            <person name="Fukuda S."/>
            <person name="Kanamori-Katayama M."/>
            <person name="Suzuki M."/>
            <person name="Aoki J."/>
            <person name="Arakawa T."/>
            <person name="Iida J."/>
            <person name="Imamura K."/>
            <person name="Itoh M."/>
            <person name="Kato T."/>
            <person name="Kawaji H."/>
            <person name="Kawagashira N."/>
            <person name="Kawashima T."/>
            <person name="Kojima M."/>
            <person name="Kondo S."/>
            <person name="Konno H."/>
            <person name="Nakano K."/>
            <person name="Ninomiya N."/>
            <person name="Nishio T."/>
            <person name="Okada M."/>
            <person name="Plessy C."/>
            <person name="Shibata K."/>
            <person name="Shiraki T."/>
            <person name="Suzuki S."/>
            <person name="Tagami M."/>
            <person name="Waki K."/>
            <person name="Watahiki A."/>
            <person name="Okamura-Oho Y."/>
            <person name="Suzuki H."/>
            <person name="Kawai J."/>
            <person name="Hayashizaki Y."/>
        </authorList>
    </citation>
    <scope>NUCLEOTIDE SEQUENCE [LARGE SCALE MRNA]</scope>
    <source>
        <strain>C57BL/6J</strain>
        <tissue>Bone marrow</tissue>
    </source>
</reference>
<reference key="3">
    <citation type="journal article" date="2004" name="Genome Res.">
        <title>The status, quality, and expansion of the NIH full-length cDNA project: the Mammalian Gene Collection (MGC).</title>
        <authorList>
            <consortium name="The MGC Project Team"/>
        </authorList>
    </citation>
    <scope>NUCLEOTIDE SEQUENCE [LARGE SCALE MRNA]</scope>
    <source>
        <strain>Czech II</strain>
        <tissue>Mammary gland</tissue>
    </source>
</reference>
<reference key="4">
    <citation type="journal article" date="2009" name="Pediatr. Res.">
        <title>The human and mouse SLC25A29 mitochondrial transporters rescue the deficient ornithine metabolism in fibroblasts of patients with the hyperornithinemia-hyperammonemia-homocitrullinuria (HHH) syndrome.</title>
        <authorList>
            <person name="Camacho J.A."/>
            <person name="Rioseco-Camacho N."/>
        </authorList>
    </citation>
    <scope>TISSUE SPECIFICITY</scope>
</reference>
<reference key="5">
    <citation type="journal article" date="2010" name="Cell">
        <title>A tissue-specific atlas of mouse protein phosphorylation and expression.</title>
        <authorList>
            <person name="Huttlin E.L."/>
            <person name="Jedrychowski M.P."/>
            <person name="Elias J.E."/>
            <person name="Goswami T."/>
            <person name="Rad R."/>
            <person name="Beausoleil S.A."/>
            <person name="Villen J."/>
            <person name="Haas W."/>
            <person name="Sowa M.E."/>
            <person name="Gygi S.P."/>
        </authorList>
    </citation>
    <scope>IDENTIFICATION BY MASS SPECTROMETRY [LARGE SCALE ANALYSIS]</scope>
    <source>
        <tissue>Brown adipose tissue</tissue>
        <tissue>Heart</tissue>
        <tissue>Kidney</tissue>
        <tissue>Liver</tissue>
        <tissue>Lung</tissue>
        <tissue>Spleen</tissue>
        <tissue>Testis</tissue>
    </source>
</reference>
<reference key="6">
    <citation type="journal article" date="2013" name="Mol. Cell">
        <title>SIRT5-mediated lysine desuccinylation impacts diverse metabolic pathways.</title>
        <authorList>
            <person name="Park J."/>
            <person name="Chen Y."/>
            <person name="Tishkoff D.X."/>
            <person name="Peng C."/>
            <person name="Tan M."/>
            <person name="Dai L."/>
            <person name="Xie Z."/>
            <person name="Zhang Y."/>
            <person name="Zwaans B.M."/>
            <person name="Skinner M.E."/>
            <person name="Lombard D.B."/>
            <person name="Zhao Y."/>
        </authorList>
    </citation>
    <scope>SUCCINYLATION [LARGE SCALE ANALYSIS] AT LYS-170</scope>
    <scope>IDENTIFICATION BY MASS SPECTROMETRY [LARGE SCALE ANALYSIS]</scope>
    <source>
        <tissue>Liver</tissue>
    </source>
</reference>
<reference key="7">
    <citation type="journal article" date="2013" name="Proc. Natl. Acad. Sci. U.S.A.">
        <title>Label-free quantitative proteomics of the lysine acetylome in mitochondria identifies substrates of SIRT3 in metabolic pathways.</title>
        <authorList>
            <person name="Rardin M.J."/>
            <person name="Newman J.C."/>
            <person name="Held J.M."/>
            <person name="Cusack M.P."/>
            <person name="Sorensen D.J."/>
            <person name="Li B."/>
            <person name="Schilling B."/>
            <person name="Mooney S.D."/>
            <person name="Kahn C.R."/>
            <person name="Verdin E."/>
            <person name="Gibson B.W."/>
        </authorList>
    </citation>
    <scope>ACETYLATION [LARGE SCALE ANALYSIS] AT LYS-148; LYS-157 AND LYS-170</scope>
    <scope>IDENTIFICATION BY MASS SPECTROMETRY [LARGE SCALE ANALYSIS]</scope>
    <source>
        <tissue>Liver</tissue>
    </source>
</reference>
<accession>Q9Z2Z6</accession>
<accession>Q3U801</accession>
<sequence>MADEPKPISPFKNLLAGGFGGMCLVFVGHPLDTVKVRLQTQPPSLSGQPPMYSGTLDCFRKTLMREGITGLYRGMAAPIIGVTPMFAVCFFGFGLGKKLQQKSPEDELSYPQLFTAGMLSGVFTTGIMTPGERIKCLLQIQASSGENKYSGTLDCAKKLYQEFGIRGFYKGTVLTLMRDVPASGMYFMTYEWLKNLFTPEGKSVSDLSVPRILVAGGFAGIFNWAVAIPPDVLKSRFQTAPPGKYPNGFRDVLRELIREEGVTSLYKGFNAVMIRAFPANAACFLGFEIAMKFLNWIAPNL</sequence>